<comment type="function">
    <text evidence="1">Attaches a formyl group to the free amino group of methionyl-tRNA(fMet). The formyl group appears to play a dual role in the initiator identity of N-formylmethionyl-tRNA by promoting its recognition by IF2 and preventing the misappropriation of this tRNA by the elongation apparatus.</text>
</comment>
<comment type="catalytic activity">
    <reaction evidence="1">
        <text>L-methionyl-tRNA(fMet) + (6R)-10-formyltetrahydrofolate = N-formyl-L-methionyl-tRNA(fMet) + (6S)-5,6,7,8-tetrahydrofolate + H(+)</text>
        <dbReference type="Rhea" id="RHEA:24380"/>
        <dbReference type="Rhea" id="RHEA-COMP:9952"/>
        <dbReference type="Rhea" id="RHEA-COMP:9953"/>
        <dbReference type="ChEBI" id="CHEBI:15378"/>
        <dbReference type="ChEBI" id="CHEBI:57453"/>
        <dbReference type="ChEBI" id="CHEBI:78530"/>
        <dbReference type="ChEBI" id="CHEBI:78844"/>
        <dbReference type="ChEBI" id="CHEBI:195366"/>
        <dbReference type="EC" id="2.1.2.9"/>
    </reaction>
</comment>
<comment type="similarity">
    <text evidence="1">Belongs to the Fmt family.</text>
</comment>
<feature type="chain" id="PRO_1000020192" description="Methionyl-tRNA formyltransferase">
    <location>
        <begin position="1"/>
        <end position="342"/>
    </location>
</feature>
<feature type="binding site" evidence="1">
    <location>
        <begin position="110"/>
        <end position="113"/>
    </location>
    <ligand>
        <name>(6S)-5,6,7,8-tetrahydrofolate</name>
        <dbReference type="ChEBI" id="CHEBI:57453"/>
    </ligand>
</feature>
<evidence type="ECO:0000255" key="1">
    <source>
        <dbReference type="HAMAP-Rule" id="MF_00182"/>
    </source>
</evidence>
<keyword id="KW-0648">Protein biosynthesis</keyword>
<keyword id="KW-1185">Reference proteome</keyword>
<keyword id="KW-0808">Transferase</keyword>
<name>FMT_SYNS3</name>
<dbReference type="EC" id="2.1.2.9" evidence="1"/>
<dbReference type="EMBL" id="CP000435">
    <property type="protein sequence ID" value="ABI47641.1"/>
    <property type="molecule type" value="Genomic_DNA"/>
</dbReference>
<dbReference type="RefSeq" id="WP_011619229.1">
    <property type="nucleotide sequence ID" value="NC_008319.1"/>
</dbReference>
<dbReference type="SMR" id="Q0IAL3"/>
<dbReference type="STRING" id="64471.sync_1301"/>
<dbReference type="KEGG" id="syg:sync_1301"/>
<dbReference type="eggNOG" id="COG0223">
    <property type="taxonomic scope" value="Bacteria"/>
</dbReference>
<dbReference type="HOGENOM" id="CLU_033347_1_1_3"/>
<dbReference type="OrthoDB" id="9802815at2"/>
<dbReference type="Proteomes" id="UP000001961">
    <property type="component" value="Chromosome"/>
</dbReference>
<dbReference type="GO" id="GO:0005829">
    <property type="term" value="C:cytosol"/>
    <property type="evidence" value="ECO:0007669"/>
    <property type="project" value="TreeGrafter"/>
</dbReference>
<dbReference type="GO" id="GO:0004479">
    <property type="term" value="F:methionyl-tRNA formyltransferase activity"/>
    <property type="evidence" value="ECO:0007669"/>
    <property type="project" value="UniProtKB-UniRule"/>
</dbReference>
<dbReference type="CDD" id="cd08646">
    <property type="entry name" value="FMT_core_Met-tRNA-FMT_N"/>
    <property type="match status" value="1"/>
</dbReference>
<dbReference type="CDD" id="cd08704">
    <property type="entry name" value="Met_tRNA_FMT_C"/>
    <property type="match status" value="1"/>
</dbReference>
<dbReference type="Gene3D" id="3.40.50.12230">
    <property type="match status" value="1"/>
</dbReference>
<dbReference type="HAMAP" id="MF_00182">
    <property type="entry name" value="Formyl_trans"/>
    <property type="match status" value="1"/>
</dbReference>
<dbReference type="InterPro" id="IPR005794">
    <property type="entry name" value="Fmt"/>
</dbReference>
<dbReference type="InterPro" id="IPR005793">
    <property type="entry name" value="Formyl_trans_C"/>
</dbReference>
<dbReference type="InterPro" id="IPR002376">
    <property type="entry name" value="Formyl_transf_N"/>
</dbReference>
<dbReference type="InterPro" id="IPR036477">
    <property type="entry name" value="Formyl_transf_N_sf"/>
</dbReference>
<dbReference type="InterPro" id="IPR011034">
    <property type="entry name" value="Formyl_transferase-like_C_sf"/>
</dbReference>
<dbReference type="InterPro" id="IPR044135">
    <property type="entry name" value="Met-tRNA-FMT_C"/>
</dbReference>
<dbReference type="InterPro" id="IPR041711">
    <property type="entry name" value="Met-tRNA-FMT_N"/>
</dbReference>
<dbReference type="NCBIfam" id="TIGR00460">
    <property type="entry name" value="fmt"/>
    <property type="match status" value="1"/>
</dbReference>
<dbReference type="PANTHER" id="PTHR11138">
    <property type="entry name" value="METHIONYL-TRNA FORMYLTRANSFERASE"/>
    <property type="match status" value="1"/>
</dbReference>
<dbReference type="PANTHER" id="PTHR11138:SF5">
    <property type="entry name" value="METHIONYL-TRNA FORMYLTRANSFERASE, MITOCHONDRIAL"/>
    <property type="match status" value="1"/>
</dbReference>
<dbReference type="Pfam" id="PF02911">
    <property type="entry name" value="Formyl_trans_C"/>
    <property type="match status" value="1"/>
</dbReference>
<dbReference type="Pfam" id="PF00551">
    <property type="entry name" value="Formyl_trans_N"/>
    <property type="match status" value="1"/>
</dbReference>
<dbReference type="SUPFAM" id="SSF50486">
    <property type="entry name" value="FMT C-terminal domain-like"/>
    <property type="match status" value="1"/>
</dbReference>
<dbReference type="SUPFAM" id="SSF53328">
    <property type="entry name" value="Formyltransferase"/>
    <property type="match status" value="1"/>
</dbReference>
<reference key="1">
    <citation type="journal article" date="2006" name="Proc. Natl. Acad. Sci. U.S.A.">
        <title>Genome sequence of Synechococcus CC9311: insights into adaptation to a coastal environment.</title>
        <authorList>
            <person name="Palenik B."/>
            <person name="Ren Q."/>
            <person name="Dupont C.L."/>
            <person name="Myers G.S."/>
            <person name="Heidelberg J.F."/>
            <person name="Badger J.H."/>
            <person name="Madupu R."/>
            <person name="Nelson W.C."/>
            <person name="Brinkac L.M."/>
            <person name="Dodson R.J."/>
            <person name="Durkin A.S."/>
            <person name="Daugherty S.C."/>
            <person name="Sullivan S.A."/>
            <person name="Khouri H."/>
            <person name="Mohamoud Y."/>
            <person name="Halpin R."/>
            <person name="Paulsen I.T."/>
        </authorList>
    </citation>
    <scope>NUCLEOTIDE SEQUENCE [LARGE SCALE GENOMIC DNA]</scope>
    <source>
        <strain>CC9311</strain>
    </source>
</reference>
<organism>
    <name type="scientific">Synechococcus sp. (strain CC9311)</name>
    <dbReference type="NCBI Taxonomy" id="64471"/>
    <lineage>
        <taxon>Bacteria</taxon>
        <taxon>Bacillati</taxon>
        <taxon>Cyanobacteriota</taxon>
        <taxon>Cyanophyceae</taxon>
        <taxon>Synechococcales</taxon>
        <taxon>Synechococcaceae</taxon>
        <taxon>Synechococcus</taxon>
    </lineage>
</organism>
<accession>Q0IAL3</accession>
<sequence>MNILFWGTPDYAVPTLMALHQAGHTIVGVVTQPDRRRGRGKTLVPSAVKAKAIKMGLRVFTPERIKQDETCQQQLAELQPDLSVVVAFGQILPKNVLNQPPLGCWNGHGSLLPRWRGAGPIQWSILEGDPETGVGVMAMEEGLDTGPVLIERNLPIGLLDNGHTLAERMSVLTAELMVEAMPLIESAGQGSEPERRARLKVMNQSDRSGDASYARMLTKQDHQIDWSASALNIHRKVMALYPNAVTLWNDKRLKLLHCEPLIDRLREELPAEVHPLIGRWPTGGHPPGTVLESVKGLGVVVSTSGCPILVRAAQLEGKGRSDGDSLIQQLNAAAEQQFGTFS</sequence>
<protein>
    <recommendedName>
        <fullName evidence="1">Methionyl-tRNA formyltransferase</fullName>
        <ecNumber evidence="1">2.1.2.9</ecNumber>
    </recommendedName>
</protein>
<proteinExistence type="inferred from homology"/>
<gene>
    <name evidence="1" type="primary">fmt</name>
    <name type="ordered locus">sync_1301</name>
</gene>